<protein>
    <recommendedName>
        <fullName evidence="1">Lipid-A-disaccharide synthase</fullName>
        <ecNumber evidence="1">2.4.1.182</ecNumber>
    </recommendedName>
</protein>
<accession>A5UD44</accession>
<organism>
    <name type="scientific">Haemophilus influenzae (strain PittEE)</name>
    <dbReference type="NCBI Taxonomy" id="374930"/>
    <lineage>
        <taxon>Bacteria</taxon>
        <taxon>Pseudomonadati</taxon>
        <taxon>Pseudomonadota</taxon>
        <taxon>Gammaproteobacteria</taxon>
        <taxon>Pasteurellales</taxon>
        <taxon>Pasteurellaceae</taxon>
        <taxon>Haemophilus</taxon>
    </lineage>
</organism>
<dbReference type="EC" id="2.4.1.182" evidence="1"/>
<dbReference type="EMBL" id="CP000671">
    <property type="protein sequence ID" value="ABQ98695.1"/>
    <property type="molecule type" value="Genomic_DNA"/>
</dbReference>
<dbReference type="SMR" id="A5UD44"/>
<dbReference type="CAZy" id="GT19">
    <property type="family name" value="Glycosyltransferase Family 19"/>
</dbReference>
<dbReference type="KEGG" id="hip:CGSHiEE_06780"/>
<dbReference type="HOGENOM" id="CLU_036577_3_0_6"/>
<dbReference type="UniPathway" id="UPA00973"/>
<dbReference type="GO" id="GO:0016020">
    <property type="term" value="C:membrane"/>
    <property type="evidence" value="ECO:0007669"/>
    <property type="project" value="GOC"/>
</dbReference>
<dbReference type="GO" id="GO:0008915">
    <property type="term" value="F:lipid-A-disaccharide synthase activity"/>
    <property type="evidence" value="ECO:0007669"/>
    <property type="project" value="UniProtKB-UniRule"/>
</dbReference>
<dbReference type="GO" id="GO:0005543">
    <property type="term" value="F:phospholipid binding"/>
    <property type="evidence" value="ECO:0007669"/>
    <property type="project" value="TreeGrafter"/>
</dbReference>
<dbReference type="GO" id="GO:0009245">
    <property type="term" value="P:lipid A biosynthetic process"/>
    <property type="evidence" value="ECO:0007669"/>
    <property type="project" value="UniProtKB-UniRule"/>
</dbReference>
<dbReference type="HAMAP" id="MF_00392">
    <property type="entry name" value="LpxB"/>
    <property type="match status" value="1"/>
</dbReference>
<dbReference type="InterPro" id="IPR003835">
    <property type="entry name" value="Glyco_trans_19"/>
</dbReference>
<dbReference type="NCBIfam" id="TIGR00215">
    <property type="entry name" value="lpxB"/>
    <property type="match status" value="1"/>
</dbReference>
<dbReference type="PANTHER" id="PTHR30372">
    <property type="entry name" value="LIPID-A-DISACCHARIDE SYNTHASE"/>
    <property type="match status" value="1"/>
</dbReference>
<dbReference type="PANTHER" id="PTHR30372:SF4">
    <property type="entry name" value="LIPID-A-DISACCHARIDE SYNTHASE, MITOCHONDRIAL-RELATED"/>
    <property type="match status" value="1"/>
</dbReference>
<dbReference type="Pfam" id="PF02684">
    <property type="entry name" value="LpxB"/>
    <property type="match status" value="1"/>
</dbReference>
<dbReference type="SUPFAM" id="SSF53756">
    <property type="entry name" value="UDP-Glycosyltransferase/glycogen phosphorylase"/>
    <property type="match status" value="1"/>
</dbReference>
<reference key="1">
    <citation type="journal article" date="2007" name="Genome Biol.">
        <title>Characterization and modeling of the Haemophilus influenzae core and supragenomes based on the complete genomic sequences of Rd and 12 clinical nontypeable strains.</title>
        <authorList>
            <person name="Hogg J.S."/>
            <person name="Hu F.Z."/>
            <person name="Janto B."/>
            <person name="Boissy R."/>
            <person name="Hayes J."/>
            <person name="Keefe R."/>
            <person name="Post J.C."/>
            <person name="Ehrlich G.D."/>
        </authorList>
    </citation>
    <scope>NUCLEOTIDE SEQUENCE [LARGE SCALE GENOMIC DNA]</scope>
    <source>
        <strain>PittEE</strain>
    </source>
</reference>
<name>LPXB_HAEIE</name>
<feature type="chain" id="PRO_1000049400" description="Lipid-A-disaccharide synthase">
    <location>
        <begin position="1"/>
        <end position="390"/>
    </location>
</feature>
<evidence type="ECO:0000255" key="1">
    <source>
        <dbReference type="HAMAP-Rule" id="MF_00392"/>
    </source>
</evidence>
<keyword id="KW-0328">Glycosyltransferase</keyword>
<keyword id="KW-0441">Lipid A biosynthesis</keyword>
<keyword id="KW-0444">Lipid biosynthesis</keyword>
<keyword id="KW-0443">Lipid metabolism</keyword>
<keyword id="KW-0808">Transferase</keyword>
<proteinExistence type="inferred from homology"/>
<comment type="function">
    <text evidence="1">Condensation of UDP-2,3-diacylglucosamine and 2,3-diacylglucosamine-1-phosphate to form lipid A disaccharide, a precursor of lipid A, a phosphorylated glycolipid that anchors the lipopolysaccharide to the outer membrane of the cell.</text>
</comment>
<comment type="catalytic activity">
    <reaction evidence="1">
        <text>a lipid X + a UDP-2-N,3-O-bis[(3R)-3-hydroxyacyl]-alpha-D-glucosamine = a lipid A disaccharide + UDP + H(+)</text>
        <dbReference type="Rhea" id="RHEA:67828"/>
        <dbReference type="ChEBI" id="CHEBI:15378"/>
        <dbReference type="ChEBI" id="CHEBI:58223"/>
        <dbReference type="ChEBI" id="CHEBI:137748"/>
        <dbReference type="ChEBI" id="CHEBI:176338"/>
        <dbReference type="ChEBI" id="CHEBI:176343"/>
        <dbReference type="EC" id="2.4.1.182"/>
    </reaction>
</comment>
<comment type="pathway">
    <text evidence="1">Bacterial outer membrane biogenesis; LPS lipid A biosynthesis.</text>
</comment>
<comment type="similarity">
    <text evidence="1">Belongs to the LpxB family.</text>
</comment>
<gene>
    <name evidence="1" type="primary">lpxB</name>
    <name type="ordered locus">CGSHiEE_06780</name>
</gene>
<sequence length="390" mass="43594">MNKTNPTIALVAGEVSGDILGAGLIRQLKAHYPNARFIGIAGPRMLAEGCETLVDMEELSVMGLAEILKHLPRLLKIRKNIIQTMLQEKPDVYIGIDAPDFNLDVELKLKANGIKTIHYVSPSVWAWRQNRIHKIAKATHQVLAFLPFEKAFYDKFNVPCRFIGHTMADAIPLKPNRAEACQTLQIDPAQRYLAILVGSRGSEVEFLAEPFLKTALLLKEQFPDLQFLVPLVNEKRRIQFEAIKAKITPNLDLHLIDGNARQAMIAADATLLASGTAALEAMLCKSPMVVGYRMKPLTYFLAKRLVKTDYISLPNLLANEMLVPEMIQEECTPELLAEKLSVYLSDDESAVKNRHVLIQHFTDLHQKIQCNADKQAAQAVIDLLEGTENV</sequence>